<accession>Q68XB6</accession>
<reference key="1">
    <citation type="journal article" date="2004" name="J. Bacteriol.">
        <title>Complete genome sequence of Rickettsia typhi and comparison with sequences of other Rickettsiae.</title>
        <authorList>
            <person name="McLeod M.P."/>
            <person name="Qin X."/>
            <person name="Karpathy S.E."/>
            <person name="Gioia J."/>
            <person name="Highlander S.K."/>
            <person name="Fox G.E."/>
            <person name="McNeill T.Z."/>
            <person name="Jiang H."/>
            <person name="Muzny D."/>
            <person name="Jacob L.S."/>
            <person name="Hawes A.C."/>
            <person name="Sodergren E."/>
            <person name="Gill R."/>
            <person name="Hume J."/>
            <person name="Morgan M."/>
            <person name="Fan G."/>
            <person name="Amin A.G."/>
            <person name="Gibbs R.A."/>
            <person name="Hong C."/>
            <person name="Yu X.-J."/>
            <person name="Walker D.H."/>
            <person name="Weinstock G.M."/>
        </authorList>
    </citation>
    <scope>NUCLEOTIDE SEQUENCE [LARGE SCALE GENOMIC DNA]</scope>
    <source>
        <strain>ATCC VR-144 / Wilmington</strain>
    </source>
</reference>
<protein>
    <recommendedName>
        <fullName>Cytochrome c homolog</fullName>
    </recommendedName>
</protein>
<feature type="chain" id="PRO_0000288759" description="Cytochrome c homolog">
    <location>
        <begin position="1"/>
        <end position="175"/>
    </location>
</feature>
<feature type="topological domain" description="Cytoplasmic" evidence="2">
    <location>
        <begin position="1"/>
        <end position="8"/>
    </location>
</feature>
<feature type="transmembrane region" description="Helical; Signal-anchor" evidence="2">
    <location>
        <begin position="9"/>
        <end position="29"/>
    </location>
</feature>
<feature type="topological domain" description="Periplasmic" evidence="2">
    <location>
        <begin position="30"/>
        <end position="175"/>
    </location>
</feature>
<feature type="binding site" description="covalent" evidence="3">
    <location>
        <position position="84"/>
    </location>
    <ligand>
        <name>heme c</name>
        <dbReference type="ChEBI" id="CHEBI:61717"/>
    </ligand>
</feature>
<feature type="binding site" description="covalent" evidence="3">
    <location>
        <position position="87"/>
    </location>
    <ligand>
        <name>heme c</name>
        <dbReference type="ChEBI" id="CHEBI:61717"/>
    </ligand>
</feature>
<feature type="binding site" description="axial binding residue" evidence="3">
    <location>
        <position position="88"/>
    </location>
    <ligand>
        <name>heme c</name>
        <dbReference type="ChEBI" id="CHEBI:61717"/>
    </ligand>
    <ligandPart>
        <name>Fe</name>
        <dbReference type="ChEBI" id="CHEBI:18248"/>
    </ligandPart>
</feature>
<feature type="binding site" description="axial binding residue" evidence="3">
    <location>
        <position position="150"/>
    </location>
    <ligand>
        <name>heme c</name>
        <dbReference type="ChEBI" id="CHEBI:61717"/>
    </ligand>
    <ligandPart>
        <name>Fe</name>
        <dbReference type="ChEBI" id="CHEBI:18248"/>
    </ligandPart>
</feature>
<evidence type="ECO:0000250" key="1"/>
<evidence type="ECO:0000255" key="2"/>
<evidence type="ECO:0000255" key="3">
    <source>
        <dbReference type="PROSITE-ProRule" id="PRU00433"/>
    </source>
</evidence>
<evidence type="ECO:0000305" key="4"/>
<gene>
    <name type="primary">cycM</name>
    <name type="ordered locus">RT0245</name>
</gene>
<organism>
    <name type="scientific">Rickettsia typhi (strain ATCC VR-144 / Wilmington)</name>
    <dbReference type="NCBI Taxonomy" id="257363"/>
    <lineage>
        <taxon>Bacteria</taxon>
        <taxon>Pseudomonadati</taxon>
        <taxon>Pseudomonadota</taxon>
        <taxon>Alphaproteobacteria</taxon>
        <taxon>Rickettsiales</taxon>
        <taxon>Rickettsiaceae</taxon>
        <taxon>Rickettsieae</taxon>
        <taxon>Rickettsia</taxon>
        <taxon>typhus group</taxon>
    </lineage>
</organism>
<proteinExistence type="inferred from homology"/>
<sequence length="175" mass="19363">MTGKELNKIVAAILFASLIAMIVRFVANILYKPNLQVLNRGYSIAIQESSVNTNATVIVQEPVNIPEVMKTANANHGREIVKKCLMCHSLDKDGPNKLGPHLWNIVGRSKASITDYKYSFAISKLGGVWDDENLFAFLHKPSSYAPGTKMSFAGISKPQDIADVILFLKNYVHDK</sequence>
<dbReference type="EMBL" id="AE017197">
    <property type="protein sequence ID" value="AAU03726.1"/>
    <property type="molecule type" value="Genomic_DNA"/>
</dbReference>
<dbReference type="RefSeq" id="WP_011190711.1">
    <property type="nucleotide sequence ID" value="NC_006142.1"/>
</dbReference>
<dbReference type="SMR" id="Q68XB6"/>
<dbReference type="KEGG" id="rty:RT0245"/>
<dbReference type="eggNOG" id="COG3474">
    <property type="taxonomic scope" value="Bacteria"/>
</dbReference>
<dbReference type="HOGENOM" id="CLU_060944_4_0_5"/>
<dbReference type="OrthoDB" id="9805828at2"/>
<dbReference type="Proteomes" id="UP000000604">
    <property type="component" value="Chromosome"/>
</dbReference>
<dbReference type="GO" id="GO:0005886">
    <property type="term" value="C:plasma membrane"/>
    <property type="evidence" value="ECO:0007669"/>
    <property type="project" value="UniProtKB-SubCell"/>
</dbReference>
<dbReference type="GO" id="GO:0009055">
    <property type="term" value="F:electron transfer activity"/>
    <property type="evidence" value="ECO:0007669"/>
    <property type="project" value="InterPro"/>
</dbReference>
<dbReference type="GO" id="GO:0020037">
    <property type="term" value="F:heme binding"/>
    <property type="evidence" value="ECO:0007669"/>
    <property type="project" value="InterPro"/>
</dbReference>
<dbReference type="GO" id="GO:0046872">
    <property type="term" value="F:metal ion binding"/>
    <property type="evidence" value="ECO:0007669"/>
    <property type="project" value="UniProtKB-KW"/>
</dbReference>
<dbReference type="FunFam" id="1.10.760.10:FF:000026">
    <property type="entry name" value="Cytochrome C, membrane-bound"/>
    <property type="match status" value="1"/>
</dbReference>
<dbReference type="Gene3D" id="1.10.760.10">
    <property type="entry name" value="Cytochrome c-like domain"/>
    <property type="match status" value="1"/>
</dbReference>
<dbReference type="InterPro" id="IPR009056">
    <property type="entry name" value="Cyt_c-like_dom"/>
</dbReference>
<dbReference type="InterPro" id="IPR036909">
    <property type="entry name" value="Cyt_c-like_dom_sf"/>
</dbReference>
<dbReference type="InterPro" id="IPR002327">
    <property type="entry name" value="Cyt_c_1A/1B"/>
</dbReference>
<dbReference type="PANTHER" id="PTHR11961">
    <property type="entry name" value="CYTOCHROME C"/>
    <property type="match status" value="1"/>
</dbReference>
<dbReference type="Pfam" id="PF00034">
    <property type="entry name" value="Cytochrom_C"/>
    <property type="match status" value="1"/>
</dbReference>
<dbReference type="PRINTS" id="PR00604">
    <property type="entry name" value="CYTCHRMECIAB"/>
</dbReference>
<dbReference type="SUPFAM" id="SSF46626">
    <property type="entry name" value="Cytochrome c"/>
    <property type="match status" value="1"/>
</dbReference>
<dbReference type="PROSITE" id="PS51007">
    <property type="entry name" value="CYTC"/>
    <property type="match status" value="1"/>
</dbReference>
<keyword id="KW-1003">Cell membrane</keyword>
<keyword id="KW-0249">Electron transport</keyword>
<keyword id="KW-0349">Heme</keyword>
<keyword id="KW-0408">Iron</keyword>
<keyword id="KW-0472">Membrane</keyword>
<keyword id="KW-0479">Metal-binding</keyword>
<keyword id="KW-0735">Signal-anchor</keyword>
<keyword id="KW-0812">Transmembrane</keyword>
<keyword id="KW-1133">Transmembrane helix</keyword>
<keyword id="KW-0813">Transport</keyword>
<comment type="function">
    <text evidence="1">May be involved in electron transfer from bc1 complex to aa3.</text>
</comment>
<comment type="subcellular location">
    <subcellularLocation>
        <location evidence="1">Cell membrane</location>
        <topology evidence="1">Single-pass type II membrane protein</topology>
    </subcellularLocation>
</comment>
<comment type="PTM">
    <text evidence="1">Binds 1 heme c group covalently per subunit.</text>
</comment>
<comment type="similarity">
    <text evidence="4">Belongs to the cytochrome c family.</text>
</comment>
<name>CYCM_RICTY</name>